<name>TRMD_CALS8</name>
<evidence type="ECO:0000255" key="1">
    <source>
        <dbReference type="HAMAP-Rule" id="MF_00605"/>
    </source>
</evidence>
<sequence length="245" mass="28159">MVFKVLTLFPEVILQATNFSILKRAQEKGLIKIEAINIRDYTKDKHKRTDDYPYGGGFGMVMTAQPIVDAYESIKSSKPHRVIYLTPQGKKYTQDIAKEFSKEEELVIICGHYEGIDQRVIDLIVTDEISIGDYVLSGGEYAALVLIDSISRLVEGVIEKKSVEEESFSECLLEYPHYTRPYEFRGLKVPEVLLSGNHEKIKKWRRYQSLLKTIKSRPDLINAANLTKEDIEFLIKYCESQKIVL</sequence>
<proteinExistence type="inferred from homology"/>
<gene>
    <name evidence="1" type="primary">trmD</name>
    <name type="ordered locus">Csac_2154</name>
</gene>
<accession>A4XLF1</accession>
<dbReference type="EC" id="2.1.1.228" evidence="1"/>
<dbReference type="EMBL" id="CP000679">
    <property type="protein sequence ID" value="ABP67736.1"/>
    <property type="molecule type" value="Genomic_DNA"/>
</dbReference>
<dbReference type="RefSeq" id="WP_011917667.1">
    <property type="nucleotide sequence ID" value="NC_009437.1"/>
</dbReference>
<dbReference type="SMR" id="A4XLF1"/>
<dbReference type="STRING" id="351627.Csac_2154"/>
<dbReference type="KEGG" id="csc:Csac_2154"/>
<dbReference type="eggNOG" id="COG0336">
    <property type="taxonomic scope" value="Bacteria"/>
</dbReference>
<dbReference type="HOGENOM" id="CLU_047363_0_1_9"/>
<dbReference type="OrthoDB" id="9807416at2"/>
<dbReference type="Proteomes" id="UP000000256">
    <property type="component" value="Chromosome"/>
</dbReference>
<dbReference type="GO" id="GO:0005829">
    <property type="term" value="C:cytosol"/>
    <property type="evidence" value="ECO:0007669"/>
    <property type="project" value="TreeGrafter"/>
</dbReference>
<dbReference type="GO" id="GO:0052906">
    <property type="term" value="F:tRNA (guanine(37)-N1)-methyltransferase activity"/>
    <property type="evidence" value="ECO:0007669"/>
    <property type="project" value="UniProtKB-UniRule"/>
</dbReference>
<dbReference type="GO" id="GO:0002939">
    <property type="term" value="P:tRNA N1-guanine methylation"/>
    <property type="evidence" value="ECO:0007669"/>
    <property type="project" value="TreeGrafter"/>
</dbReference>
<dbReference type="CDD" id="cd18080">
    <property type="entry name" value="TrmD-like"/>
    <property type="match status" value="1"/>
</dbReference>
<dbReference type="FunFam" id="1.10.1270.20:FF:000001">
    <property type="entry name" value="tRNA (guanine-N(1)-)-methyltransferase"/>
    <property type="match status" value="1"/>
</dbReference>
<dbReference type="FunFam" id="3.40.1280.10:FF:000001">
    <property type="entry name" value="tRNA (guanine-N(1)-)-methyltransferase"/>
    <property type="match status" value="1"/>
</dbReference>
<dbReference type="Gene3D" id="3.40.1280.10">
    <property type="match status" value="1"/>
</dbReference>
<dbReference type="Gene3D" id="1.10.1270.20">
    <property type="entry name" value="tRNA(m1g37)methyltransferase, domain 2"/>
    <property type="match status" value="1"/>
</dbReference>
<dbReference type="HAMAP" id="MF_00605">
    <property type="entry name" value="TrmD"/>
    <property type="match status" value="1"/>
</dbReference>
<dbReference type="InterPro" id="IPR029028">
    <property type="entry name" value="Alpha/beta_knot_MTases"/>
</dbReference>
<dbReference type="InterPro" id="IPR023148">
    <property type="entry name" value="tRNA_m1G_MeTrfase_C_sf"/>
</dbReference>
<dbReference type="InterPro" id="IPR002649">
    <property type="entry name" value="tRNA_m1G_MeTrfase_TrmD"/>
</dbReference>
<dbReference type="InterPro" id="IPR029026">
    <property type="entry name" value="tRNA_m1G_MTases_N"/>
</dbReference>
<dbReference type="InterPro" id="IPR016009">
    <property type="entry name" value="tRNA_MeTrfase_TRMD/TRM10"/>
</dbReference>
<dbReference type="NCBIfam" id="NF000648">
    <property type="entry name" value="PRK00026.1"/>
    <property type="match status" value="1"/>
</dbReference>
<dbReference type="NCBIfam" id="TIGR00088">
    <property type="entry name" value="trmD"/>
    <property type="match status" value="1"/>
</dbReference>
<dbReference type="PANTHER" id="PTHR46417">
    <property type="entry name" value="TRNA (GUANINE-N(1)-)-METHYLTRANSFERASE"/>
    <property type="match status" value="1"/>
</dbReference>
<dbReference type="PANTHER" id="PTHR46417:SF1">
    <property type="entry name" value="TRNA (GUANINE-N(1)-)-METHYLTRANSFERASE"/>
    <property type="match status" value="1"/>
</dbReference>
<dbReference type="Pfam" id="PF01746">
    <property type="entry name" value="tRNA_m1G_MT"/>
    <property type="match status" value="1"/>
</dbReference>
<dbReference type="PIRSF" id="PIRSF000386">
    <property type="entry name" value="tRNA_mtase"/>
    <property type="match status" value="1"/>
</dbReference>
<dbReference type="SUPFAM" id="SSF75217">
    <property type="entry name" value="alpha/beta knot"/>
    <property type="match status" value="1"/>
</dbReference>
<protein>
    <recommendedName>
        <fullName evidence="1">tRNA (guanine-N(1)-)-methyltransferase</fullName>
        <ecNumber evidence="1">2.1.1.228</ecNumber>
    </recommendedName>
    <alternativeName>
        <fullName evidence="1">M1G-methyltransferase</fullName>
    </alternativeName>
    <alternativeName>
        <fullName evidence="1">tRNA [GM37] methyltransferase</fullName>
    </alternativeName>
</protein>
<comment type="function">
    <text evidence="1">Specifically methylates guanosine-37 in various tRNAs.</text>
</comment>
<comment type="catalytic activity">
    <reaction evidence="1">
        <text>guanosine(37) in tRNA + S-adenosyl-L-methionine = N(1)-methylguanosine(37) in tRNA + S-adenosyl-L-homocysteine + H(+)</text>
        <dbReference type="Rhea" id="RHEA:36899"/>
        <dbReference type="Rhea" id="RHEA-COMP:10145"/>
        <dbReference type="Rhea" id="RHEA-COMP:10147"/>
        <dbReference type="ChEBI" id="CHEBI:15378"/>
        <dbReference type="ChEBI" id="CHEBI:57856"/>
        <dbReference type="ChEBI" id="CHEBI:59789"/>
        <dbReference type="ChEBI" id="CHEBI:73542"/>
        <dbReference type="ChEBI" id="CHEBI:74269"/>
        <dbReference type="EC" id="2.1.1.228"/>
    </reaction>
</comment>
<comment type="subunit">
    <text evidence="1">Homodimer.</text>
</comment>
<comment type="subcellular location">
    <subcellularLocation>
        <location evidence="1">Cytoplasm</location>
    </subcellularLocation>
</comment>
<comment type="similarity">
    <text evidence="1">Belongs to the RNA methyltransferase TrmD family.</text>
</comment>
<keyword id="KW-0963">Cytoplasm</keyword>
<keyword id="KW-0489">Methyltransferase</keyword>
<keyword id="KW-0949">S-adenosyl-L-methionine</keyword>
<keyword id="KW-0808">Transferase</keyword>
<keyword id="KW-0819">tRNA processing</keyword>
<feature type="chain" id="PRO_1000006463" description="tRNA (guanine-N(1)-)-methyltransferase">
    <location>
        <begin position="1"/>
        <end position="245"/>
    </location>
</feature>
<feature type="binding site" evidence="1">
    <location>
        <position position="111"/>
    </location>
    <ligand>
        <name>S-adenosyl-L-methionine</name>
        <dbReference type="ChEBI" id="CHEBI:59789"/>
    </ligand>
</feature>
<feature type="binding site" evidence="1">
    <location>
        <begin position="131"/>
        <end position="136"/>
    </location>
    <ligand>
        <name>S-adenosyl-L-methionine</name>
        <dbReference type="ChEBI" id="CHEBI:59789"/>
    </ligand>
</feature>
<organism>
    <name type="scientific">Caldicellulosiruptor saccharolyticus (strain ATCC 43494 / DSM 8903 / Tp8T 6331)</name>
    <dbReference type="NCBI Taxonomy" id="351627"/>
    <lineage>
        <taxon>Bacteria</taxon>
        <taxon>Bacillati</taxon>
        <taxon>Bacillota</taxon>
        <taxon>Bacillota incertae sedis</taxon>
        <taxon>Caldicellulosiruptorales</taxon>
        <taxon>Caldicellulosiruptoraceae</taxon>
        <taxon>Caldicellulosiruptor</taxon>
    </lineage>
</organism>
<reference key="1">
    <citation type="submission" date="2007-04" db="EMBL/GenBank/DDBJ databases">
        <title>Genome sequence of the thermophilic hydrogen-producing bacterium Caldicellulosiruptor saccharolyticus DSM 8903.</title>
        <authorList>
            <person name="Copeland A."/>
            <person name="Lucas S."/>
            <person name="Lapidus A."/>
            <person name="Barry K."/>
            <person name="Detter J.C."/>
            <person name="Glavina del Rio T."/>
            <person name="Hammon N."/>
            <person name="Israni S."/>
            <person name="Dalin E."/>
            <person name="Tice H."/>
            <person name="Pitluck S."/>
            <person name="Kiss H."/>
            <person name="Brettin T."/>
            <person name="Bruce D."/>
            <person name="Han C."/>
            <person name="Schmutz J."/>
            <person name="Larimer F."/>
            <person name="Land M."/>
            <person name="Hauser L."/>
            <person name="Kyrpides N."/>
            <person name="Lykidis A."/>
            <person name="van de Werken H.J.G."/>
            <person name="Verhaart M.R.A."/>
            <person name="VanFossen A.L."/>
            <person name="Lewis D.L."/>
            <person name="Nichols J.D."/>
            <person name="Goorissen H.P."/>
            <person name="van Niel E.W.J."/>
            <person name="Stams F.J.M."/>
            <person name="Willquist K.U."/>
            <person name="Ward D.E."/>
            <person name="van der Oost J."/>
            <person name="Kelly R.M."/>
            <person name="Kengen S.M.W."/>
            <person name="Richardson P."/>
        </authorList>
    </citation>
    <scope>NUCLEOTIDE SEQUENCE [LARGE SCALE GENOMIC DNA]</scope>
    <source>
        <strain>ATCC 43494 / DSM 8903 / Tp8T 6331</strain>
    </source>
</reference>